<accession>Q5AFP3</accession>
<accession>A0A1D8PQQ0</accession>
<accession>Q3MPP3</accession>
<sequence length="262" mass="28602">MAIKEETNEFSQGNEGNSHSTNNNNNSNNSNSNNNADVSAPVDDDDDDDGTSQGKTQKERRKIEIKFIQEKSRRHITFSKRKAGIMKKAYELSVLTGTQVLLLVVSETGLVYTFTTPKLQPLVTKSEGKNLIQACLNAPEEGLGDDQENQSDGNTGDSPDQSPAPATNPNVMGAAGHAHHIQQQQQQQQQAQQQAQQQMAPMPSHGLPTHYSNPQGAGNPGVPPQQQGQHQPGIPLQGGYSDQYSYFGNIQNNNIPNQQQYQ</sequence>
<gene>
    <name type="primary">MCM1</name>
    <name type="ordered locus">CAALFM_C700890CA</name>
    <name type="ORF">CaO19.7025</name>
</gene>
<comment type="function">
    <text evidence="4 5">Transcription factor that is recruited by AHR1 to the promoters of genes involved in biofilm formation, which include several key adhesion genes. Plays an important role in cell adhesion, hyphal growth and virulence. Implicated in the regulation of opaque-phase-specific gene expression.</text>
</comment>
<comment type="subunit">
    <text evidence="5">Interacts with AHR1.</text>
</comment>
<comment type="subcellular location">
    <subcellularLocation>
        <location evidence="1">Nucleus</location>
    </subcellularLocation>
</comment>
<comment type="induction">
    <text evidence="3">Expression is high in white-phase cells and low in opaque-phase cells.</text>
</comment>
<protein>
    <recommendedName>
        <fullName>Transcription factor of morphogenesis MCM1</fullName>
    </recommendedName>
</protein>
<feature type="chain" id="PRO_0000420187" description="Transcription factor of morphogenesis MCM1">
    <location>
        <begin position="1"/>
        <end position="262"/>
    </location>
</feature>
<feature type="domain" description="MADS-box" evidence="1">
    <location>
        <begin position="58"/>
        <end position="118"/>
    </location>
</feature>
<feature type="region of interest" description="Disordered" evidence="2">
    <location>
        <begin position="1"/>
        <end position="62"/>
    </location>
</feature>
<feature type="region of interest" description="Disordered" evidence="2">
    <location>
        <begin position="140"/>
        <end position="262"/>
    </location>
</feature>
<feature type="compositionally biased region" description="Low complexity" evidence="2">
    <location>
        <begin position="17"/>
        <end position="35"/>
    </location>
</feature>
<feature type="compositionally biased region" description="Polar residues" evidence="2">
    <location>
        <begin position="150"/>
        <end position="170"/>
    </location>
</feature>
<feature type="compositionally biased region" description="Low complexity" evidence="2">
    <location>
        <begin position="182"/>
        <end position="198"/>
    </location>
</feature>
<feature type="compositionally biased region" description="Low complexity" evidence="2">
    <location>
        <begin position="224"/>
        <end position="239"/>
    </location>
</feature>
<feature type="compositionally biased region" description="Low complexity" evidence="2">
    <location>
        <begin position="249"/>
        <end position="262"/>
    </location>
</feature>
<evidence type="ECO:0000255" key="1">
    <source>
        <dbReference type="PROSITE-ProRule" id="PRU00251"/>
    </source>
</evidence>
<evidence type="ECO:0000256" key="2">
    <source>
        <dbReference type="SAM" id="MobiDB-lite"/>
    </source>
</evidence>
<evidence type="ECO:0000269" key="3">
    <source>
    </source>
</evidence>
<evidence type="ECO:0000269" key="4">
    <source>
    </source>
</evidence>
<evidence type="ECO:0000269" key="5">
    <source>
    </source>
</evidence>
<name>MCM1_CANAL</name>
<dbReference type="EMBL" id="CP017629">
    <property type="protein sequence ID" value="AOW30465.1"/>
    <property type="molecule type" value="Genomic_DNA"/>
</dbReference>
<dbReference type="RefSeq" id="XP_720319.1">
    <property type="nucleotide sequence ID" value="XM_715226.1"/>
</dbReference>
<dbReference type="SMR" id="Q5AFP3"/>
<dbReference type="BioGRID" id="1221144">
    <property type="interactions" value="2"/>
</dbReference>
<dbReference type="STRING" id="237561.Q5AFP3"/>
<dbReference type="EnsemblFungi" id="C7_00890C_A-T">
    <property type="protein sequence ID" value="C7_00890C_A-T-p1"/>
    <property type="gene ID" value="C7_00890C_A"/>
</dbReference>
<dbReference type="GeneID" id="3638050"/>
<dbReference type="KEGG" id="cal:CAALFM_C700890CA"/>
<dbReference type="CGD" id="CAL0000194125">
    <property type="gene designation" value="MCM1"/>
</dbReference>
<dbReference type="VEuPathDB" id="FungiDB:C7_00890C_A"/>
<dbReference type="eggNOG" id="KOG0015">
    <property type="taxonomic scope" value="Eukaryota"/>
</dbReference>
<dbReference type="HOGENOM" id="CLU_063931_0_0_1"/>
<dbReference type="InParanoid" id="Q5AFP3"/>
<dbReference type="OMA" id="AGHAHHI"/>
<dbReference type="OrthoDB" id="2284405at2759"/>
<dbReference type="Proteomes" id="UP000000559">
    <property type="component" value="Chromosome 7"/>
</dbReference>
<dbReference type="GO" id="GO:0000785">
    <property type="term" value="C:chromatin"/>
    <property type="evidence" value="ECO:0000314"/>
    <property type="project" value="CGD"/>
</dbReference>
<dbReference type="GO" id="GO:0005634">
    <property type="term" value="C:nucleus"/>
    <property type="evidence" value="ECO:0007669"/>
    <property type="project" value="UniProtKB-SubCell"/>
</dbReference>
<dbReference type="GO" id="GO:0003677">
    <property type="term" value="F:DNA binding"/>
    <property type="evidence" value="ECO:0000314"/>
    <property type="project" value="CGD"/>
</dbReference>
<dbReference type="GO" id="GO:0000981">
    <property type="term" value="F:DNA-binding transcription factor activity, RNA polymerase II-specific"/>
    <property type="evidence" value="ECO:0000318"/>
    <property type="project" value="GO_Central"/>
</dbReference>
<dbReference type="GO" id="GO:0046983">
    <property type="term" value="F:protein dimerization activity"/>
    <property type="evidence" value="ECO:0007669"/>
    <property type="project" value="InterPro"/>
</dbReference>
<dbReference type="GO" id="GO:0000978">
    <property type="term" value="F:RNA polymerase II cis-regulatory region sequence-specific DNA binding"/>
    <property type="evidence" value="ECO:0000318"/>
    <property type="project" value="GO_Central"/>
</dbReference>
<dbReference type="GO" id="GO:0007155">
    <property type="term" value="P:cell adhesion"/>
    <property type="evidence" value="ECO:0007669"/>
    <property type="project" value="UniProtKB-KW"/>
</dbReference>
<dbReference type="GO" id="GO:0006974">
    <property type="term" value="P:DNA damage response"/>
    <property type="evidence" value="ECO:0000314"/>
    <property type="project" value="CGD"/>
</dbReference>
<dbReference type="GO" id="GO:0030447">
    <property type="term" value="P:filamentous growth"/>
    <property type="evidence" value="ECO:0000315"/>
    <property type="project" value="CGD"/>
</dbReference>
<dbReference type="GO" id="GO:0044182">
    <property type="term" value="P:filamentous growth of a population of unicellular organisms"/>
    <property type="evidence" value="ECO:0000315"/>
    <property type="project" value="CGD"/>
</dbReference>
<dbReference type="GO" id="GO:1900461">
    <property type="term" value="P:positive regulation of pseudohyphal growth by positive regulation of transcription from RNA polymerase II promoter"/>
    <property type="evidence" value="ECO:0000315"/>
    <property type="project" value="CGD"/>
</dbReference>
<dbReference type="GO" id="GO:0045944">
    <property type="term" value="P:positive regulation of transcription by RNA polymerase II"/>
    <property type="evidence" value="ECO:0000318"/>
    <property type="project" value="GO_Central"/>
</dbReference>
<dbReference type="GO" id="GO:2000220">
    <property type="term" value="P:regulation of pseudohyphal growth"/>
    <property type="evidence" value="ECO:0000315"/>
    <property type="project" value="CGD"/>
</dbReference>
<dbReference type="CDD" id="cd00266">
    <property type="entry name" value="MADS_SRF_like"/>
    <property type="match status" value="1"/>
</dbReference>
<dbReference type="FunFam" id="3.40.1810.10:FF:000002">
    <property type="entry name" value="Serum response factor b"/>
    <property type="match status" value="1"/>
</dbReference>
<dbReference type="Gene3D" id="3.40.1810.10">
    <property type="entry name" value="Transcription factor, MADS-box"/>
    <property type="match status" value="1"/>
</dbReference>
<dbReference type="InterPro" id="IPR050142">
    <property type="entry name" value="MADS-box/MEF2_TF"/>
</dbReference>
<dbReference type="InterPro" id="IPR033897">
    <property type="entry name" value="SRF-like_MADS-box"/>
</dbReference>
<dbReference type="InterPro" id="IPR002100">
    <property type="entry name" value="TF_MADSbox"/>
</dbReference>
<dbReference type="InterPro" id="IPR036879">
    <property type="entry name" value="TF_MADSbox_sf"/>
</dbReference>
<dbReference type="PANTHER" id="PTHR48019">
    <property type="entry name" value="SERUM RESPONSE FACTOR HOMOLOG"/>
    <property type="match status" value="1"/>
</dbReference>
<dbReference type="Pfam" id="PF00319">
    <property type="entry name" value="SRF-TF"/>
    <property type="match status" value="1"/>
</dbReference>
<dbReference type="PRINTS" id="PR00404">
    <property type="entry name" value="MADSDOMAIN"/>
</dbReference>
<dbReference type="SMART" id="SM00432">
    <property type="entry name" value="MADS"/>
    <property type="match status" value="1"/>
</dbReference>
<dbReference type="SUPFAM" id="SSF55455">
    <property type="entry name" value="SRF-like"/>
    <property type="match status" value="1"/>
</dbReference>
<dbReference type="PROSITE" id="PS50066">
    <property type="entry name" value="MADS_BOX_2"/>
    <property type="match status" value="1"/>
</dbReference>
<organism>
    <name type="scientific">Candida albicans (strain SC5314 / ATCC MYA-2876)</name>
    <name type="common">Yeast</name>
    <dbReference type="NCBI Taxonomy" id="237561"/>
    <lineage>
        <taxon>Eukaryota</taxon>
        <taxon>Fungi</taxon>
        <taxon>Dikarya</taxon>
        <taxon>Ascomycota</taxon>
        <taxon>Saccharomycotina</taxon>
        <taxon>Pichiomycetes</taxon>
        <taxon>Debaryomycetaceae</taxon>
        <taxon>Candida/Lodderomyces clade</taxon>
        <taxon>Candida</taxon>
    </lineage>
</organism>
<proteinExistence type="evidence at protein level"/>
<reference key="1">
    <citation type="journal article" date="2004" name="Proc. Natl. Acad. Sci. U.S.A.">
        <title>The diploid genome sequence of Candida albicans.</title>
        <authorList>
            <person name="Jones T."/>
            <person name="Federspiel N.A."/>
            <person name="Chibana H."/>
            <person name="Dungan J."/>
            <person name="Kalman S."/>
            <person name="Magee B.B."/>
            <person name="Newport G."/>
            <person name="Thorstenson Y.R."/>
            <person name="Agabian N."/>
            <person name="Magee P.T."/>
            <person name="Davis R.W."/>
            <person name="Scherer S."/>
        </authorList>
    </citation>
    <scope>NUCLEOTIDE SEQUENCE [LARGE SCALE GENOMIC DNA]</scope>
    <source>
        <strain>SC5314 / ATCC MYA-2876</strain>
    </source>
</reference>
<reference key="2">
    <citation type="journal article" date="2007" name="Genome Biol.">
        <title>Assembly of the Candida albicans genome into sixteen supercontigs aligned on the eight chromosomes.</title>
        <authorList>
            <person name="van het Hoog M."/>
            <person name="Rast T.J."/>
            <person name="Martchenko M."/>
            <person name="Grindle S."/>
            <person name="Dignard D."/>
            <person name="Hogues H."/>
            <person name="Cuomo C."/>
            <person name="Berriman M."/>
            <person name="Scherer S."/>
            <person name="Magee B.B."/>
            <person name="Whiteway M."/>
            <person name="Chibana H."/>
            <person name="Nantel A."/>
            <person name="Magee P.T."/>
        </authorList>
    </citation>
    <scope>GENOME REANNOTATION</scope>
    <source>
        <strain>SC5314 / ATCC MYA-2876</strain>
    </source>
</reference>
<reference key="3">
    <citation type="journal article" date="2013" name="Genome Biol.">
        <title>Assembly of a phased diploid Candida albicans genome facilitates allele-specific measurements and provides a simple model for repeat and indel structure.</title>
        <authorList>
            <person name="Muzzey D."/>
            <person name="Schwartz K."/>
            <person name="Weissman J.S."/>
            <person name="Sherlock G."/>
        </authorList>
    </citation>
    <scope>NUCLEOTIDE SEQUENCE [LARGE SCALE GENOMIC DNA]</scope>
    <scope>GENOME REANNOTATION</scope>
    <source>
        <strain>SC5314 / ATCC MYA-2876</strain>
    </source>
</reference>
<reference key="4">
    <citation type="journal article" date="2001" name="J. Bacteriol.">
        <title>The histone deacetylase genes HDA1 and RPD3 play distinct roles in regulation of high-frequency phenotypic switching in Candida albicans.</title>
        <authorList>
            <person name="Srikantha T."/>
            <person name="Tsai L."/>
            <person name="Daniels K."/>
            <person name="Klar A.J."/>
            <person name="Soll D.R."/>
        </authorList>
    </citation>
    <scope>INDUCTION</scope>
</reference>
<reference key="5">
    <citation type="journal article" date="2003" name="Mol. Microbiol.">
        <title>A screen in Saccharomyces cerevisiae identified CaMCM1, an essential gene in Candida albicans crucial for morphogenesis.</title>
        <authorList>
            <person name="Rottmann M."/>
            <person name="Dieter S."/>
            <person name="Brunner H."/>
            <person name="Rupp S."/>
        </authorList>
    </citation>
    <scope>FUNCTION</scope>
</reference>
<reference key="6">
    <citation type="journal article" date="2011" name="Mol. Microbiol.">
        <title>The zinc cluster transcription factor Ahr1p directs Mcm1p regulation of Candida albicans adhesion.</title>
        <authorList>
            <person name="Askew C."/>
            <person name="Sellam A."/>
            <person name="Epp E."/>
            <person name="Mallick J."/>
            <person name="Hogues H."/>
            <person name="Mullick A."/>
            <person name="Nantel A."/>
            <person name="Whiteway M."/>
        </authorList>
    </citation>
    <scope>FUNCTION</scope>
    <scope>DNA-BINDING</scope>
    <scope>INTERACTION WITH AHR1</scope>
</reference>
<keyword id="KW-0130">Cell adhesion</keyword>
<keyword id="KW-0238">DNA-binding</keyword>
<keyword id="KW-0539">Nucleus</keyword>
<keyword id="KW-1185">Reference proteome</keyword>
<keyword id="KW-0804">Transcription</keyword>
<keyword id="KW-0805">Transcription regulation</keyword>
<keyword id="KW-0843">Virulence</keyword>